<keyword id="KW-0963">Cytoplasm</keyword>
<keyword id="KW-0501">Molybdenum cofactor biosynthesis</keyword>
<keyword id="KW-1185">Reference proteome</keyword>
<gene>
    <name evidence="1" type="primary">fdhD</name>
    <name type="ordered locus">SSO2821</name>
</gene>
<proteinExistence type="inferred from homology"/>
<dbReference type="EMBL" id="AE006641">
    <property type="protein sequence ID" value="AAK42932.1"/>
    <property type="molecule type" value="Genomic_DNA"/>
</dbReference>
<dbReference type="PIR" id="E90459">
    <property type="entry name" value="E90459"/>
</dbReference>
<dbReference type="SMR" id="Q97V15"/>
<dbReference type="STRING" id="273057.SSO2821"/>
<dbReference type="PaxDb" id="273057-SSO2821"/>
<dbReference type="EnsemblBacteria" id="AAK42932">
    <property type="protein sequence ID" value="AAK42932"/>
    <property type="gene ID" value="SSO2821"/>
</dbReference>
<dbReference type="KEGG" id="sso:SSO2821"/>
<dbReference type="PATRIC" id="fig|273057.12.peg.2907"/>
<dbReference type="eggNOG" id="arCOG04358">
    <property type="taxonomic scope" value="Archaea"/>
</dbReference>
<dbReference type="HOGENOM" id="CLU_056887_3_0_2"/>
<dbReference type="InParanoid" id="Q97V15"/>
<dbReference type="PhylomeDB" id="Q97V15"/>
<dbReference type="Proteomes" id="UP000001974">
    <property type="component" value="Chromosome"/>
</dbReference>
<dbReference type="GO" id="GO:0005737">
    <property type="term" value="C:cytoplasm"/>
    <property type="evidence" value="ECO:0007669"/>
    <property type="project" value="UniProtKB-SubCell"/>
</dbReference>
<dbReference type="GO" id="GO:0097163">
    <property type="term" value="F:sulfur carrier activity"/>
    <property type="evidence" value="ECO:0007669"/>
    <property type="project" value="UniProtKB-UniRule"/>
</dbReference>
<dbReference type="GO" id="GO:0016783">
    <property type="term" value="F:sulfurtransferase activity"/>
    <property type="evidence" value="ECO:0007669"/>
    <property type="project" value="InterPro"/>
</dbReference>
<dbReference type="GO" id="GO:0006777">
    <property type="term" value="P:Mo-molybdopterin cofactor biosynthetic process"/>
    <property type="evidence" value="ECO:0007669"/>
    <property type="project" value="UniProtKB-UniRule"/>
</dbReference>
<dbReference type="Gene3D" id="3.10.20.10">
    <property type="match status" value="1"/>
</dbReference>
<dbReference type="Gene3D" id="3.40.140.10">
    <property type="entry name" value="Cytidine Deaminase, domain 2"/>
    <property type="match status" value="1"/>
</dbReference>
<dbReference type="HAMAP" id="MF_00187">
    <property type="entry name" value="FdhD"/>
    <property type="match status" value="1"/>
</dbReference>
<dbReference type="InterPro" id="IPR016193">
    <property type="entry name" value="Cytidine_deaminase-like"/>
</dbReference>
<dbReference type="InterPro" id="IPR003786">
    <property type="entry name" value="FdhD"/>
</dbReference>
<dbReference type="NCBIfam" id="TIGR00129">
    <property type="entry name" value="fdhD_narQ"/>
    <property type="match status" value="1"/>
</dbReference>
<dbReference type="PANTHER" id="PTHR30592">
    <property type="entry name" value="FORMATE DEHYDROGENASE"/>
    <property type="match status" value="1"/>
</dbReference>
<dbReference type="PANTHER" id="PTHR30592:SF1">
    <property type="entry name" value="SULFUR CARRIER PROTEIN FDHD"/>
    <property type="match status" value="1"/>
</dbReference>
<dbReference type="Pfam" id="PF02634">
    <property type="entry name" value="FdhD-NarQ"/>
    <property type="match status" value="1"/>
</dbReference>
<dbReference type="PIRSF" id="PIRSF015626">
    <property type="entry name" value="FdhD"/>
    <property type="match status" value="1"/>
</dbReference>
<dbReference type="SUPFAM" id="SSF53927">
    <property type="entry name" value="Cytidine deaminase-like"/>
    <property type="match status" value="1"/>
</dbReference>
<name>FDHD_SACS2</name>
<comment type="function">
    <text evidence="1">Required for formate dehydrogenase (FDH) activity. Acts as a sulfur carrier protein that transfers sulfur from IscS to the molybdenum cofactor prior to its insertion into FDH.</text>
</comment>
<comment type="subcellular location">
    <subcellularLocation>
        <location evidence="1">Cytoplasm</location>
    </subcellularLocation>
</comment>
<comment type="similarity">
    <text evidence="1">Belongs to the FdhD family.</text>
</comment>
<organism>
    <name type="scientific">Saccharolobus solfataricus (strain ATCC 35092 / DSM 1617 / JCM 11322 / P2)</name>
    <name type="common">Sulfolobus solfataricus</name>
    <dbReference type="NCBI Taxonomy" id="273057"/>
    <lineage>
        <taxon>Archaea</taxon>
        <taxon>Thermoproteota</taxon>
        <taxon>Thermoprotei</taxon>
        <taxon>Sulfolobales</taxon>
        <taxon>Sulfolobaceae</taxon>
        <taxon>Saccharolobus</taxon>
    </lineage>
</organism>
<accession>Q97V15</accession>
<protein>
    <recommendedName>
        <fullName evidence="1">Sulfur carrier protein FdhD</fullName>
    </recommendedName>
</protein>
<sequence length="257" mass="28711">MGVRVKRFDLVRVKDSEAYKDSDFVAVEEPLNIRTCFEKCEDFAIIMRTPGDDKELSLGFLYSEGVINSIHDVEDIKQVENNVIEVKLNKPIGIRIRELIVNSSCGVCGRAFLYTLNILKSDLKVKREVIFSFPEKLREKQSVFNISGGLHATALFNPQGELLFIYEDVGRHNAVDKVVGRLLLEDKIPASNYIMQVSGRLGYEIVSKGIKAGIPIICGISAPTSLAIEIAEEAGLTLIGFLRGKSLNIYTHSERIY</sequence>
<evidence type="ECO:0000255" key="1">
    <source>
        <dbReference type="HAMAP-Rule" id="MF_00187"/>
    </source>
</evidence>
<feature type="chain" id="PRO_0000152940" description="Sulfur carrier protein FdhD">
    <location>
        <begin position="1"/>
        <end position="257"/>
    </location>
</feature>
<feature type="active site" description="Cysteine persulfide intermediate" evidence="1">
    <location>
        <position position="105"/>
    </location>
</feature>
<reference key="1">
    <citation type="journal article" date="2001" name="Proc. Natl. Acad. Sci. U.S.A.">
        <title>The complete genome of the crenarchaeon Sulfolobus solfataricus P2.</title>
        <authorList>
            <person name="She Q."/>
            <person name="Singh R.K."/>
            <person name="Confalonieri F."/>
            <person name="Zivanovic Y."/>
            <person name="Allard G."/>
            <person name="Awayez M.J."/>
            <person name="Chan-Weiher C.C.-Y."/>
            <person name="Clausen I.G."/>
            <person name="Curtis B.A."/>
            <person name="De Moors A."/>
            <person name="Erauso G."/>
            <person name="Fletcher C."/>
            <person name="Gordon P.M.K."/>
            <person name="Heikamp-de Jong I."/>
            <person name="Jeffries A.C."/>
            <person name="Kozera C.J."/>
            <person name="Medina N."/>
            <person name="Peng X."/>
            <person name="Thi-Ngoc H.P."/>
            <person name="Redder P."/>
            <person name="Schenk M.E."/>
            <person name="Theriault C."/>
            <person name="Tolstrup N."/>
            <person name="Charlebois R.L."/>
            <person name="Doolittle W.F."/>
            <person name="Duguet M."/>
            <person name="Gaasterland T."/>
            <person name="Garrett R.A."/>
            <person name="Ragan M.A."/>
            <person name="Sensen C.W."/>
            <person name="Van der Oost J."/>
        </authorList>
    </citation>
    <scope>NUCLEOTIDE SEQUENCE [LARGE SCALE GENOMIC DNA]</scope>
    <source>
        <strain>ATCC 35092 / DSM 1617 / JCM 11322 / P2</strain>
    </source>
</reference>